<proteinExistence type="inferred from homology"/>
<accession>B0TW73</accession>
<gene>
    <name evidence="1" type="primary">yidC</name>
    <name type="ordered locus">Fphi_0760</name>
</gene>
<evidence type="ECO:0000255" key="1">
    <source>
        <dbReference type="HAMAP-Rule" id="MF_01810"/>
    </source>
</evidence>
<evidence type="ECO:0000256" key="2">
    <source>
        <dbReference type="SAM" id="MobiDB-lite"/>
    </source>
</evidence>
<sequence length="551" mass="62053">MKANHIRILLLVTIAIMLISLMGRWEQTFPSNSSQSQTTQTQQDNSHYNSDTPATTNVSTSDAKASLTKTTSFSKYDDAKSVTINTDVFKNLKISLLDGAIISASLEDYSVSLDDKTPMALLTDEQGSEYIAKSTIVINKKPVDVNFESQGIKKENGKQVLTLTGSVDGLEITRTYTFDDAKYNISVSQNIKNTTSEPVSVIIDDSLARDFNPAGDSFSLLNAHSYTFTGVAYSTANDSFRKESFKDISKTNGQPTVINSQGLGWVAFIQHYFVSAWIPQSNDSKIYYKNLNNDVFEAGAYTGISIAPNQSESIDSVLYSGPIIKANLVDLAPNLEKTLDYGMLSFFSEIIFWVMNQIHSLVGNWGLAIILVTCLIKLIFYPLSAKSYRSMAKMRMLQPRVKRLQETYKDDRQVLGKKMMEMYKEEKVNPLSGCLPMLIQIPIFISLYWVLLESVELRQAPFIFWIHDLSMKDPYFVLPILMGISMFLQQKLSPAPADPMQAKIMMFLPVIFTFLFASFPSGLVLYWLTNNVISILQQWIITRHYQATHKK</sequence>
<name>YIDC_FRAP2</name>
<organism>
    <name type="scientific">Francisella philomiragia subsp. philomiragia (strain ATCC 25017 / CCUG 19701 / FSC 153 / O#319-036)</name>
    <dbReference type="NCBI Taxonomy" id="484022"/>
    <lineage>
        <taxon>Bacteria</taxon>
        <taxon>Pseudomonadati</taxon>
        <taxon>Pseudomonadota</taxon>
        <taxon>Gammaproteobacteria</taxon>
        <taxon>Thiotrichales</taxon>
        <taxon>Francisellaceae</taxon>
        <taxon>Francisella</taxon>
    </lineage>
</organism>
<keyword id="KW-0997">Cell inner membrane</keyword>
<keyword id="KW-1003">Cell membrane</keyword>
<keyword id="KW-0143">Chaperone</keyword>
<keyword id="KW-0472">Membrane</keyword>
<keyword id="KW-0653">Protein transport</keyword>
<keyword id="KW-0812">Transmembrane</keyword>
<keyword id="KW-1133">Transmembrane helix</keyword>
<keyword id="KW-0813">Transport</keyword>
<reference key="1">
    <citation type="submission" date="2007-12" db="EMBL/GenBank/DDBJ databases">
        <title>Complete sequence of chromosome of Francisella philomiragia subsp. philomiragia ATCC 25017.</title>
        <authorList>
            <consortium name="US DOE Joint Genome Institute"/>
            <person name="Copeland A."/>
            <person name="Lucas S."/>
            <person name="Lapidus A."/>
            <person name="Barry K."/>
            <person name="Detter J.C."/>
            <person name="Glavina del Rio T."/>
            <person name="Hammon N."/>
            <person name="Israni S."/>
            <person name="Dalin E."/>
            <person name="Tice H."/>
            <person name="Pitluck S."/>
            <person name="Chain P."/>
            <person name="Malfatti S."/>
            <person name="Shin M."/>
            <person name="Vergez L."/>
            <person name="Schmutz J."/>
            <person name="Larimer F."/>
            <person name="Land M."/>
            <person name="Hauser L."/>
            <person name="Richardson P."/>
        </authorList>
    </citation>
    <scope>NUCLEOTIDE SEQUENCE [LARGE SCALE GENOMIC DNA]</scope>
    <source>
        <strain>ATCC 25017 / CCUG 19701 / FSC 153 / O#319-036</strain>
    </source>
</reference>
<protein>
    <recommendedName>
        <fullName evidence="1">Membrane protein insertase YidC</fullName>
    </recommendedName>
    <alternativeName>
        <fullName evidence="1">Foldase YidC</fullName>
    </alternativeName>
    <alternativeName>
        <fullName evidence="1">Membrane integrase YidC</fullName>
    </alternativeName>
    <alternativeName>
        <fullName evidence="1">Membrane protein YidC</fullName>
    </alternativeName>
</protein>
<feature type="chain" id="PRO_1000088253" description="Membrane protein insertase YidC">
    <location>
        <begin position="1"/>
        <end position="551"/>
    </location>
</feature>
<feature type="transmembrane region" description="Helical" evidence="1">
    <location>
        <begin position="3"/>
        <end position="23"/>
    </location>
</feature>
<feature type="transmembrane region" description="Helical" evidence="1">
    <location>
        <begin position="361"/>
        <end position="381"/>
    </location>
</feature>
<feature type="transmembrane region" description="Helical" evidence="1">
    <location>
        <begin position="431"/>
        <end position="451"/>
    </location>
</feature>
<feature type="transmembrane region" description="Helical" evidence="1">
    <location>
        <begin position="504"/>
        <end position="524"/>
    </location>
</feature>
<feature type="region of interest" description="Disordered" evidence="2">
    <location>
        <begin position="30"/>
        <end position="61"/>
    </location>
</feature>
<feature type="compositionally biased region" description="Low complexity" evidence="2">
    <location>
        <begin position="30"/>
        <end position="43"/>
    </location>
</feature>
<feature type="compositionally biased region" description="Polar residues" evidence="2">
    <location>
        <begin position="44"/>
        <end position="61"/>
    </location>
</feature>
<comment type="function">
    <text evidence="1">Required for the insertion and/or proper folding and/or complex formation of integral membrane proteins into the membrane. Involved in integration of membrane proteins that insert both dependently and independently of the Sec translocase complex, as well as at least some lipoproteins. Aids folding of multispanning membrane proteins.</text>
</comment>
<comment type="subunit">
    <text evidence="1">Interacts with the Sec translocase complex via SecD. Specifically interacts with transmembrane segments of nascent integral membrane proteins during membrane integration.</text>
</comment>
<comment type="subcellular location">
    <subcellularLocation>
        <location evidence="1">Cell inner membrane</location>
        <topology evidence="1">Multi-pass membrane protein</topology>
    </subcellularLocation>
</comment>
<comment type="similarity">
    <text evidence="1">Belongs to the OXA1/ALB3/YidC family. Type 1 subfamily.</text>
</comment>
<dbReference type="EMBL" id="CP000937">
    <property type="protein sequence ID" value="ABZ86981.1"/>
    <property type="molecule type" value="Genomic_DNA"/>
</dbReference>
<dbReference type="SMR" id="B0TW73"/>
<dbReference type="KEGG" id="fph:Fphi_0760"/>
<dbReference type="eggNOG" id="COG0706">
    <property type="taxonomic scope" value="Bacteria"/>
</dbReference>
<dbReference type="HOGENOM" id="CLU_016535_3_0_6"/>
<dbReference type="GO" id="GO:0005886">
    <property type="term" value="C:plasma membrane"/>
    <property type="evidence" value="ECO:0007669"/>
    <property type="project" value="UniProtKB-SubCell"/>
</dbReference>
<dbReference type="GO" id="GO:0032977">
    <property type="term" value="F:membrane insertase activity"/>
    <property type="evidence" value="ECO:0007669"/>
    <property type="project" value="InterPro"/>
</dbReference>
<dbReference type="GO" id="GO:0051205">
    <property type="term" value="P:protein insertion into membrane"/>
    <property type="evidence" value="ECO:0007669"/>
    <property type="project" value="TreeGrafter"/>
</dbReference>
<dbReference type="GO" id="GO:0015031">
    <property type="term" value="P:protein transport"/>
    <property type="evidence" value="ECO:0007669"/>
    <property type="project" value="UniProtKB-KW"/>
</dbReference>
<dbReference type="CDD" id="cd20070">
    <property type="entry name" value="5TM_YidC_Alb3"/>
    <property type="match status" value="1"/>
</dbReference>
<dbReference type="CDD" id="cd19961">
    <property type="entry name" value="EcYidC-like_peri"/>
    <property type="match status" value="1"/>
</dbReference>
<dbReference type="Gene3D" id="2.70.98.90">
    <property type="match status" value="1"/>
</dbReference>
<dbReference type="HAMAP" id="MF_01810">
    <property type="entry name" value="YidC_type1"/>
    <property type="match status" value="1"/>
</dbReference>
<dbReference type="InterPro" id="IPR019998">
    <property type="entry name" value="Membr_insert_YidC"/>
</dbReference>
<dbReference type="InterPro" id="IPR028053">
    <property type="entry name" value="Membr_insert_YidC_N"/>
</dbReference>
<dbReference type="InterPro" id="IPR001708">
    <property type="entry name" value="YidC/ALB3/OXA1/COX18"/>
</dbReference>
<dbReference type="InterPro" id="IPR028055">
    <property type="entry name" value="YidC/Oxa/ALB_C"/>
</dbReference>
<dbReference type="InterPro" id="IPR047196">
    <property type="entry name" value="YidC_ALB_C"/>
</dbReference>
<dbReference type="InterPro" id="IPR038221">
    <property type="entry name" value="YidC_periplasmic_sf"/>
</dbReference>
<dbReference type="NCBIfam" id="NF002352">
    <property type="entry name" value="PRK01318.1-3"/>
    <property type="match status" value="1"/>
</dbReference>
<dbReference type="NCBIfam" id="NF002353">
    <property type="entry name" value="PRK01318.1-4"/>
    <property type="match status" value="1"/>
</dbReference>
<dbReference type="NCBIfam" id="TIGR03593">
    <property type="entry name" value="yidC_nterm"/>
    <property type="match status" value="1"/>
</dbReference>
<dbReference type="NCBIfam" id="TIGR03592">
    <property type="entry name" value="yidC_oxa1_cterm"/>
    <property type="match status" value="1"/>
</dbReference>
<dbReference type="PANTHER" id="PTHR12428:SF65">
    <property type="entry name" value="CYTOCHROME C OXIDASE ASSEMBLY PROTEIN COX18, MITOCHONDRIAL"/>
    <property type="match status" value="1"/>
</dbReference>
<dbReference type="PANTHER" id="PTHR12428">
    <property type="entry name" value="OXA1"/>
    <property type="match status" value="1"/>
</dbReference>
<dbReference type="Pfam" id="PF02096">
    <property type="entry name" value="60KD_IMP"/>
    <property type="match status" value="1"/>
</dbReference>
<dbReference type="Pfam" id="PF14849">
    <property type="entry name" value="YidC_periplas"/>
    <property type="match status" value="1"/>
</dbReference>
<dbReference type="PRINTS" id="PR00701">
    <property type="entry name" value="60KDINNERMP"/>
</dbReference>
<dbReference type="PRINTS" id="PR01900">
    <property type="entry name" value="YIDCPROTEIN"/>
</dbReference>